<reference key="1">
    <citation type="journal article" date="2005" name="Science">
        <title>The transcriptional landscape of the mammalian genome.</title>
        <authorList>
            <person name="Carninci P."/>
            <person name="Kasukawa T."/>
            <person name="Katayama S."/>
            <person name="Gough J."/>
            <person name="Frith M.C."/>
            <person name="Maeda N."/>
            <person name="Oyama R."/>
            <person name="Ravasi T."/>
            <person name="Lenhard B."/>
            <person name="Wells C."/>
            <person name="Kodzius R."/>
            <person name="Shimokawa K."/>
            <person name="Bajic V.B."/>
            <person name="Brenner S.E."/>
            <person name="Batalov S."/>
            <person name="Forrest A.R."/>
            <person name="Zavolan M."/>
            <person name="Davis M.J."/>
            <person name="Wilming L.G."/>
            <person name="Aidinis V."/>
            <person name="Allen J.E."/>
            <person name="Ambesi-Impiombato A."/>
            <person name="Apweiler R."/>
            <person name="Aturaliya R.N."/>
            <person name="Bailey T.L."/>
            <person name="Bansal M."/>
            <person name="Baxter L."/>
            <person name="Beisel K.W."/>
            <person name="Bersano T."/>
            <person name="Bono H."/>
            <person name="Chalk A.M."/>
            <person name="Chiu K.P."/>
            <person name="Choudhary V."/>
            <person name="Christoffels A."/>
            <person name="Clutterbuck D.R."/>
            <person name="Crowe M.L."/>
            <person name="Dalla E."/>
            <person name="Dalrymple B.P."/>
            <person name="de Bono B."/>
            <person name="Della Gatta G."/>
            <person name="di Bernardo D."/>
            <person name="Down T."/>
            <person name="Engstrom P."/>
            <person name="Fagiolini M."/>
            <person name="Faulkner G."/>
            <person name="Fletcher C.F."/>
            <person name="Fukushima T."/>
            <person name="Furuno M."/>
            <person name="Futaki S."/>
            <person name="Gariboldi M."/>
            <person name="Georgii-Hemming P."/>
            <person name="Gingeras T.R."/>
            <person name="Gojobori T."/>
            <person name="Green R.E."/>
            <person name="Gustincich S."/>
            <person name="Harbers M."/>
            <person name="Hayashi Y."/>
            <person name="Hensch T.K."/>
            <person name="Hirokawa N."/>
            <person name="Hill D."/>
            <person name="Huminiecki L."/>
            <person name="Iacono M."/>
            <person name="Ikeo K."/>
            <person name="Iwama A."/>
            <person name="Ishikawa T."/>
            <person name="Jakt M."/>
            <person name="Kanapin A."/>
            <person name="Katoh M."/>
            <person name="Kawasawa Y."/>
            <person name="Kelso J."/>
            <person name="Kitamura H."/>
            <person name="Kitano H."/>
            <person name="Kollias G."/>
            <person name="Krishnan S.P."/>
            <person name="Kruger A."/>
            <person name="Kummerfeld S.K."/>
            <person name="Kurochkin I.V."/>
            <person name="Lareau L.F."/>
            <person name="Lazarevic D."/>
            <person name="Lipovich L."/>
            <person name="Liu J."/>
            <person name="Liuni S."/>
            <person name="McWilliam S."/>
            <person name="Madan Babu M."/>
            <person name="Madera M."/>
            <person name="Marchionni L."/>
            <person name="Matsuda H."/>
            <person name="Matsuzawa S."/>
            <person name="Miki H."/>
            <person name="Mignone F."/>
            <person name="Miyake S."/>
            <person name="Morris K."/>
            <person name="Mottagui-Tabar S."/>
            <person name="Mulder N."/>
            <person name="Nakano N."/>
            <person name="Nakauchi H."/>
            <person name="Ng P."/>
            <person name="Nilsson R."/>
            <person name="Nishiguchi S."/>
            <person name="Nishikawa S."/>
            <person name="Nori F."/>
            <person name="Ohara O."/>
            <person name="Okazaki Y."/>
            <person name="Orlando V."/>
            <person name="Pang K.C."/>
            <person name="Pavan W.J."/>
            <person name="Pavesi G."/>
            <person name="Pesole G."/>
            <person name="Petrovsky N."/>
            <person name="Piazza S."/>
            <person name="Reed J."/>
            <person name="Reid J.F."/>
            <person name="Ring B.Z."/>
            <person name="Ringwald M."/>
            <person name="Rost B."/>
            <person name="Ruan Y."/>
            <person name="Salzberg S.L."/>
            <person name="Sandelin A."/>
            <person name="Schneider C."/>
            <person name="Schoenbach C."/>
            <person name="Sekiguchi K."/>
            <person name="Semple C.A."/>
            <person name="Seno S."/>
            <person name="Sessa L."/>
            <person name="Sheng Y."/>
            <person name="Shibata Y."/>
            <person name="Shimada H."/>
            <person name="Shimada K."/>
            <person name="Silva D."/>
            <person name="Sinclair B."/>
            <person name="Sperling S."/>
            <person name="Stupka E."/>
            <person name="Sugiura K."/>
            <person name="Sultana R."/>
            <person name="Takenaka Y."/>
            <person name="Taki K."/>
            <person name="Tammoja K."/>
            <person name="Tan S.L."/>
            <person name="Tang S."/>
            <person name="Taylor M.S."/>
            <person name="Tegner J."/>
            <person name="Teichmann S.A."/>
            <person name="Ueda H.R."/>
            <person name="van Nimwegen E."/>
            <person name="Verardo R."/>
            <person name="Wei C.L."/>
            <person name="Yagi K."/>
            <person name="Yamanishi H."/>
            <person name="Zabarovsky E."/>
            <person name="Zhu S."/>
            <person name="Zimmer A."/>
            <person name="Hide W."/>
            <person name="Bult C."/>
            <person name="Grimmond S.M."/>
            <person name="Teasdale R.D."/>
            <person name="Liu E.T."/>
            <person name="Brusic V."/>
            <person name="Quackenbush J."/>
            <person name="Wahlestedt C."/>
            <person name="Mattick J.S."/>
            <person name="Hume D.A."/>
            <person name="Kai C."/>
            <person name="Sasaki D."/>
            <person name="Tomaru Y."/>
            <person name="Fukuda S."/>
            <person name="Kanamori-Katayama M."/>
            <person name="Suzuki M."/>
            <person name="Aoki J."/>
            <person name="Arakawa T."/>
            <person name="Iida J."/>
            <person name="Imamura K."/>
            <person name="Itoh M."/>
            <person name="Kato T."/>
            <person name="Kawaji H."/>
            <person name="Kawagashira N."/>
            <person name="Kawashima T."/>
            <person name="Kojima M."/>
            <person name="Kondo S."/>
            <person name="Konno H."/>
            <person name="Nakano K."/>
            <person name="Ninomiya N."/>
            <person name="Nishio T."/>
            <person name="Okada M."/>
            <person name="Plessy C."/>
            <person name="Shibata K."/>
            <person name="Shiraki T."/>
            <person name="Suzuki S."/>
            <person name="Tagami M."/>
            <person name="Waki K."/>
            <person name="Watahiki A."/>
            <person name="Okamura-Oho Y."/>
            <person name="Suzuki H."/>
            <person name="Kawai J."/>
            <person name="Hayashizaki Y."/>
        </authorList>
    </citation>
    <scope>NUCLEOTIDE SEQUENCE [LARGE SCALE MRNA] (ISOFORM 1)</scope>
    <source>
        <strain>C57BL/6J</strain>
        <tissue>Testis</tissue>
    </source>
</reference>
<reference key="2">
    <citation type="submission" date="2005-09" db="EMBL/GenBank/DDBJ databases">
        <authorList>
            <person name="Mural R.J."/>
            <person name="Adams M.D."/>
            <person name="Myers E.W."/>
            <person name="Smith H.O."/>
            <person name="Venter J.C."/>
        </authorList>
    </citation>
    <scope>NUCLEOTIDE SEQUENCE [LARGE SCALE GENOMIC DNA]</scope>
</reference>
<reference key="3">
    <citation type="journal article" date="2004" name="Genome Res.">
        <title>The status, quality, and expansion of the NIH full-length cDNA project: the Mammalian Gene Collection (MGC).</title>
        <authorList>
            <consortium name="The MGC Project Team"/>
        </authorList>
    </citation>
    <scope>NUCLEOTIDE SEQUENCE [LARGE SCALE MRNA] (ISOFORMS 1 AND 2)</scope>
    <source>
        <tissue>Brain</tissue>
        <tissue>Eye</tissue>
    </source>
</reference>
<reference key="4">
    <citation type="journal article" date="2020" name="Dev. Dyn.">
        <title>Mouse spermatogenesis-associated protein 1 (SPATA1), an IFT20 binding partner, is an acrosomal protein.</title>
        <authorList>
            <person name="Zhang L."/>
            <person name="Zhen J."/>
            <person name="Huang Q."/>
            <person name="Liu H."/>
            <person name="Li W."/>
            <person name="Zhang S."/>
            <person name="Min J."/>
            <person name="Li Y."/>
            <person name="Shi L."/>
            <person name="Woods J."/>
            <person name="Chen X."/>
            <person name="Shi Y."/>
            <person name="Liu Y."/>
            <person name="Hess R.A."/>
            <person name="Song S."/>
            <person name="Zhang Z."/>
        </authorList>
    </citation>
    <scope>SUBCELLULAR LOCATION</scope>
    <scope>INTERACTION WITH IFT20</scope>
    <scope>TISSUE SPECIFICITY</scope>
    <scope>DEVELOPMENTAL STAGE</scope>
</reference>
<dbReference type="EMBL" id="AK015003">
    <property type="protein sequence ID" value="BAB29666.1"/>
    <property type="molecule type" value="mRNA"/>
</dbReference>
<dbReference type="EMBL" id="CH466532">
    <property type="protein sequence ID" value="EDL11973.1"/>
    <property type="molecule type" value="Genomic_DNA"/>
</dbReference>
<dbReference type="EMBL" id="BC055056">
    <property type="protein sequence ID" value="AAH55056.1"/>
    <property type="molecule type" value="mRNA"/>
</dbReference>
<dbReference type="EMBL" id="BC139279">
    <property type="protein sequence ID" value="AAI39280.1"/>
    <property type="molecule type" value="mRNA"/>
</dbReference>
<dbReference type="EMBL" id="BC139280">
    <property type="protein sequence ID" value="AAI39281.1"/>
    <property type="molecule type" value="mRNA"/>
</dbReference>
<dbReference type="CCDS" id="CCDS38666.1">
    <molecule id="Q9D5R4-1"/>
</dbReference>
<dbReference type="RefSeq" id="NP_001303685.1">
    <molecule id="Q9D5R4-1"/>
    <property type="nucleotide sequence ID" value="NM_001316756.2"/>
</dbReference>
<dbReference type="RefSeq" id="NP_081893.1">
    <molecule id="Q9D5R4-1"/>
    <property type="nucleotide sequence ID" value="NM_027617.3"/>
</dbReference>
<dbReference type="RefSeq" id="XP_006502153.1">
    <molecule id="Q9D5R4-1"/>
    <property type="nucleotide sequence ID" value="XM_006502090.5"/>
</dbReference>
<dbReference type="SMR" id="Q9D5R4"/>
<dbReference type="FunCoup" id="Q9D5R4">
    <property type="interactions" value="421"/>
</dbReference>
<dbReference type="IntAct" id="Q9D5R4">
    <property type="interactions" value="1"/>
</dbReference>
<dbReference type="STRING" id="10090.ENSMUSP00000029839"/>
<dbReference type="PhosphoSitePlus" id="Q9D5R4"/>
<dbReference type="jPOST" id="Q9D5R4"/>
<dbReference type="PaxDb" id="10090-ENSMUSP00000029839"/>
<dbReference type="ProteomicsDB" id="257305">
    <molecule id="Q9D5R4-1"/>
</dbReference>
<dbReference type="ProteomicsDB" id="257306">
    <molecule id="Q9D5R4-2"/>
</dbReference>
<dbReference type="Antibodypedia" id="78709">
    <property type="antibodies" value="19 antibodies from 8 providers"/>
</dbReference>
<dbReference type="DNASU" id="70951"/>
<dbReference type="Ensembl" id="ENSMUST00000029839.11">
    <molecule id="Q9D5R4-1"/>
    <property type="protein sequence ID" value="ENSMUSP00000029839.5"/>
    <property type="gene ID" value="ENSMUSG00000028188.14"/>
</dbReference>
<dbReference type="Ensembl" id="ENSMUST00000093951.3">
    <molecule id="Q9D5R4-2"/>
    <property type="protein sequence ID" value="ENSMUSP00000091483.3"/>
    <property type="gene ID" value="ENSMUSG00000028188.14"/>
</dbReference>
<dbReference type="Ensembl" id="ENSMUST00000197980.5">
    <molecule id="Q9D5R4-1"/>
    <property type="protein sequence ID" value="ENSMUSP00000142800.2"/>
    <property type="gene ID" value="ENSMUSG00000028188.14"/>
</dbReference>
<dbReference type="GeneID" id="70951"/>
<dbReference type="KEGG" id="mmu:70951"/>
<dbReference type="UCSC" id="uc008rri.1">
    <molecule id="Q9D5R4-1"/>
    <property type="organism name" value="mouse"/>
</dbReference>
<dbReference type="UCSC" id="uc008rrj.1">
    <molecule id="Q9D5R4-2"/>
    <property type="organism name" value="mouse"/>
</dbReference>
<dbReference type="AGR" id="MGI:1918201"/>
<dbReference type="CTD" id="100505741"/>
<dbReference type="MGI" id="MGI:1918201">
    <property type="gene designation" value="Spata1"/>
</dbReference>
<dbReference type="VEuPathDB" id="HostDB:ENSMUSG00000028188"/>
<dbReference type="eggNOG" id="ENOG502QT5V">
    <property type="taxonomic scope" value="Eukaryota"/>
</dbReference>
<dbReference type="GeneTree" id="ENSGT00390000003298"/>
<dbReference type="HOGENOM" id="CLU_2120304_0_0_1"/>
<dbReference type="InParanoid" id="Q9D5R4"/>
<dbReference type="OMA" id="DKMKLTV"/>
<dbReference type="OrthoDB" id="9901850at2759"/>
<dbReference type="PhylomeDB" id="Q9D5R4"/>
<dbReference type="TreeFam" id="TF328372"/>
<dbReference type="BioGRID-ORCS" id="70951">
    <property type="hits" value="4 hits in 77 CRISPR screens"/>
</dbReference>
<dbReference type="ChiTaRS" id="Spata1">
    <property type="organism name" value="mouse"/>
</dbReference>
<dbReference type="PRO" id="PR:Q9D5R4"/>
<dbReference type="Proteomes" id="UP000000589">
    <property type="component" value="Chromosome 3"/>
</dbReference>
<dbReference type="RNAct" id="Q9D5R4">
    <property type="molecule type" value="protein"/>
</dbReference>
<dbReference type="Bgee" id="ENSMUSG00000028188">
    <property type="expression patterns" value="Expressed in seminiferous tubule of testis and 128 other cell types or tissues"/>
</dbReference>
<dbReference type="ExpressionAtlas" id="Q9D5R4">
    <property type="expression patterns" value="baseline and differential"/>
</dbReference>
<dbReference type="GO" id="GO:0001669">
    <property type="term" value="C:acrosomal vesicle"/>
    <property type="evidence" value="ECO:0000314"/>
    <property type="project" value="UniProtKB"/>
</dbReference>
<dbReference type="GO" id="GO:0031410">
    <property type="term" value="C:cytoplasmic vesicle"/>
    <property type="evidence" value="ECO:0000314"/>
    <property type="project" value="MGI"/>
</dbReference>
<dbReference type="InterPro" id="IPR039062">
    <property type="entry name" value="SPAT1"/>
</dbReference>
<dbReference type="InterPro" id="IPR031478">
    <property type="entry name" value="SPATA1_C"/>
</dbReference>
<dbReference type="PANTHER" id="PTHR14421">
    <property type="entry name" value="SPERMATOGENESIS-ASSOCIATED PROTEIN 1"/>
    <property type="match status" value="1"/>
</dbReference>
<dbReference type="PANTHER" id="PTHR14421:SF3">
    <property type="entry name" value="SPERMATOGENESIS-ASSOCIATED PROTEIN 1"/>
    <property type="match status" value="1"/>
</dbReference>
<dbReference type="Pfam" id="PF15743">
    <property type="entry name" value="SPATA1_C"/>
    <property type="match status" value="1"/>
</dbReference>
<organism>
    <name type="scientific">Mus musculus</name>
    <name type="common">Mouse</name>
    <dbReference type="NCBI Taxonomy" id="10090"/>
    <lineage>
        <taxon>Eukaryota</taxon>
        <taxon>Metazoa</taxon>
        <taxon>Chordata</taxon>
        <taxon>Craniata</taxon>
        <taxon>Vertebrata</taxon>
        <taxon>Euteleostomi</taxon>
        <taxon>Mammalia</taxon>
        <taxon>Eutheria</taxon>
        <taxon>Euarchontoglires</taxon>
        <taxon>Glires</taxon>
        <taxon>Rodentia</taxon>
        <taxon>Myomorpha</taxon>
        <taxon>Muroidea</taxon>
        <taxon>Muridae</taxon>
        <taxon>Murinae</taxon>
        <taxon>Mus</taxon>
        <taxon>Mus</taxon>
    </lineage>
</organism>
<feature type="chain" id="PRO_0000349216" description="Spermatogenesis-associated protein 1">
    <location>
        <begin position="1"/>
        <end position="444"/>
    </location>
</feature>
<feature type="coiled-coil region" evidence="1">
    <location>
        <begin position="268"/>
        <end position="403"/>
    </location>
</feature>
<feature type="splice variant" id="VSP_035225" description="In isoform 2." evidence="3">
    <original>ALQPELYLL</original>
    <variation>VCTMMLNSH</variation>
    <location>
        <begin position="106"/>
        <end position="114"/>
    </location>
</feature>
<feature type="splice variant" id="VSP_035226" description="In isoform 2." evidence="3">
    <location>
        <begin position="115"/>
        <end position="444"/>
    </location>
</feature>
<protein>
    <recommendedName>
        <fullName>Spermatogenesis-associated protein 1</fullName>
    </recommendedName>
</protein>
<comment type="subunit">
    <text evidence="2">Interacts with IFT20.</text>
</comment>
<comment type="subcellular location">
    <subcellularLocation>
        <location evidence="2">Cytoplasmic vesicle</location>
        <location evidence="2">Secretory vesicle</location>
        <location evidence="2">Acrosome</location>
    </subcellularLocation>
</comment>
<comment type="alternative products">
    <event type="alternative splicing"/>
    <isoform>
        <id>Q9D5R4-1</id>
        <name>1</name>
        <sequence type="displayed"/>
    </isoform>
    <isoform>
        <id>Q9D5R4-2</id>
        <name>2</name>
        <sequence type="described" ref="VSP_035225 VSP_035226"/>
    </isoform>
</comment>
<comment type="tissue specificity">
    <text evidence="2">Highly abundant in the testis, and is also expressed in the heart and kidney (at protein level).</text>
</comment>
<comment type="developmental stage">
    <text evidence="2">Detectable at postnatal day 24 (P24) and its expression is increased at day P30 and P35.</text>
</comment>
<gene>
    <name type="primary">Spata1</name>
</gene>
<keyword id="KW-0025">Alternative splicing</keyword>
<keyword id="KW-0175">Coiled coil</keyword>
<keyword id="KW-0968">Cytoplasmic vesicle</keyword>
<keyword id="KW-1185">Reference proteome</keyword>
<proteinExistence type="evidence at protein level"/>
<evidence type="ECO:0000255" key="1"/>
<evidence type="ECO:0000269" key="2">
    <source>
    </source>
</evidence>
<evidence type="ECO:0000303" key="3">
    <source>
    </source>
</evidence>
<accession>Q9D5R4</accession>
<accession>B9EI96</accession>
<accession>Q7TPN4</accession>
<name>SPAT1_MOUSE</name>
<sequence length="444" mass="51077">MSLNPSRPSSSELVELHVFYVPEGSWNYKLNTISIEVINNFISAGFIRVSPQLTLQALRERLGEFLGVDAVAEKFLFLKCIGNNLAVVKEKQESELKLKSFAPPYALQPELYLLPVIDHLGNVYSASTVTLDEQESINDTTEINGTIYRPDSVSLSKDEPGNPSLLENTWRDFTNQEEAEESQPTQNHFGNSKLLGSLEESNDYFGNLKSPFLWKNDDEEEDEEKDNAALSRRQATLVCDKECTALPDLIDFPSFPSQRVSSRLTDTSLLKIEREKIIEQMKQVKEERKYLENIREELIKKVDKLFEQNKSKRYHASDSWKKKYLDTKKVTASLEEVLTKLREDLELYYKKLLMQLEAREIKMRPRNLANISDSKNYLIIQITEVQHAIDQLKRKLDTDKMKLILEVKMRKQAVSDLQTLKADLTQKKMGAPFRPPMFSGSVPT</sequence>